<name>BIOB_PROMS</name>
<feature type="chain" id="PRO_0000381547" description="Biotin synthase">
    <location>
        <begin position="1"/>
        <end position="335"/>
    </location>
</feature>
<feature type="domain" description="Radical SAM core" evidence="2">
    <location>
        <begin position="46"/>
        <end position="274"/>
    </location>
</feature>
<feature type="binding site" evidence="1">
    <location>
        <position position="61"/>
    </location>
    <ligand>
        <name>[4Fe-4S] cluster</name>
        <dbReference type="ChEBI" id="CHEBI:49883"/>
        <note>4Fe-4S-S-AdoMet</note>
    </ligand>
</feature>
<feature type="binding site" evidence="1">
    <location>
        <position position="65"/>
    </location>
    <ligand>
        <name>[4Fe-4S] cluster</name>
        <dbReference type="ChEBI" id="CHEBI:49883"/>
        <note>4Fe-4S-S-AdoMet</note>
    </ligand>
</feature>
<feature type="binding site" evidence="1">
    <location>
        <position position="68"/>
    </location>
    <ligand>
        <name>[4Fe-4S] cluster</name>
        <dbReference type="ChEBI" id="CHEBI:49883"/>
        <note>4Fe-4S-S-AdoMet</note>
    </ligand>
</feature>
<feature type="binding site" evidence="1">
    <location>
        <position position="105"/>
    </location>
    <ligand>
        <name>[2Fe-2S] cluster</name>
        <dbReference type="ChEBI" id="CHEBI:190135"/>
    </ligand>
</feature>
<feature type="binding site" evidence="1">
    <location>
        <position position="137"/>
    </location>
    <ligand>
        <name>[2Fe-2S] cluster</name>
        <dbReference type="ChEBI" id="CHEBI:190135"/>
    </ligand>
</feature>
<feature type="binding site" evidence="1">
    <location>
        <position position="197"/>
    </location>
    <ligand>
        <name>[2Fe-2S] cluster</name>
        <dbReference type="ChEBI" id="CHEBI:190135"/>
    </ligand>
</feature>
<feature type="binding site" evidence="1">
    <location>
        <position position="269"/>
    </location>
    <ligand>
        <name>[2Fe-2S] cluster</name>
        <dbReference type="ChEBI" id="CHEBI:190135"/>
    </ligand>
</feature>
<reference key="1">
    <citation type="journal article" date="2007" name="PLoS Genet.">
        <title>Patterns and implications of gene gain and loss in the evolution of Prochlorococcus.</title>
        <authorList>
            <person name="Kettler G.C."/>
            <person name="Martiny A.C."/>
            <person name="Huang K."/>
            <person name="Zucker J."/>
            <person name="Coleman M.L."/>
            <person name="Rodrigue S."/>
            <person name="Chen F."/>
            <person name="Lapidus A."/>
            <person name="Ferriera S."/>
            <person name="Johnson J."/>
            <person name="Steglich C."/>
            <person name="Church G.M."/>
            <person name="Richardson P."/>
            <person name="Chisholm S.W."/>
        </authorList>
    </citation>
    <scope>NUCLEOTIDE SEQUENCE [LARGE SCALE GENOMIC DNA]</scope>
    <source>
        <strain>AS9601</strain>
    </source>
</reference>
<protein>
    <recommendedName>
        <fullName evidence="1">Biotin synthase</fullName>
        <ecNumber evidence="1">2.8.1.6</ecNumber>
    </recommendedName>
</protein>
<accession>A2BRS2</accession>
<sequence>MINSNNQVLSEIRFDWNKKEILEILNMPLIDLMWESQIVHRKFNSYNIQLASLFSVKTGGCEENCSYCSQSIYSASEIKSHPQFQVEEVLARAKIAKNEGADRFCMGWAWREIRDGKSFNAMLEMVSGVRDLGMEACVTAGMLTEEQASRLADAGLTAYNHNLDTSPEHYKNIITTRTYQDRLDTIKRVRNAGINVCCGGIIGLGETNGDRASLLEVLSNMNPHPESVPINSLVAIEGTGLEDNQEIDSIEMIRMIATARILMPKSKIRLSAGREKLSKEAQILCFQCGANSIFYGDELLTTSNPSFQSDRKLLKEVGVSFNKDFETCEKTLSSL</sequence>
<gene>
    <name evidence="1" type="primary">bioB</name>
    <name type="ordered locus">A9601_11991</name>
</gene>
<keyword id="KW-0001">2Fe-2S</keyword>
<keyword id="KW-0004">4Fe-4S</keyword>
<keyword id="KW-0093">Biotin biosynthesis</keyword>
<keyword id="KW-0408">Iron</keyword>
<keyword id="KW-0411">Iron-sulfur</keyword>
<keyword id="KW-0479">Metal-binding</keyword>
<keyword id="KW-0949">S-adenosyl-L-methionine</keyword>
<keyword id="KW-0808">Transferase</keyword>
<proteinExistence type="inferred from homology"/>
<dbReference type="EC" id="2.8.1.6" evidence="1"/>
<dbReference type="EMBL" id="CP000551">
    <property type="protein sequence ID" value="ABM70483.1"/>
    <property type="molecule type" value="Genomic_DNA"/>
</dbReference>
<dbReference type="RefSeq" id="WP_011818630.1">
    <property type="nucleotide sequence ID" value="NC_008816.1"/>
</dbReference>
<dbReference type="SMR" id="A2BRS2"/>
<dbReference type="STRING" id="146891.A9601_11991"/>
<dbReference type="KEGG" id="pmb:A9601_11991"/>
<dbReference type="eggNOG" id="COG0502">
    <property type="taxonomic scope" value="Bacteria"/>
</dbReference>
<dbReference type="HOGENOM" id="CLU_033172_1_2_3"/>
<dbReference type="OrthoDB" id="9786826at2"/>
<dbReference type="UniPathway" id="UPA00078">
    <property type="reaction ID" value="UER00162"/>
</dbReference>
<dbReference type="Proteomes" id="UP000002590">
    <property type="component" value="Chromosome"/>
</dbReference>
<dbReference type="GO" id="GO:0051537">
    <property type="term" value="F:2 iron, 2 sulfur cluster binding"/>
    <property type="evidence" value="ECO:0007669"/>
    <property type="project" value="UniProtKB-KW"/>
</dbReference>
<dbReference type="GO" id="GO:0051539">
    <property type="term" value="F:4 iron, 4 sulfur cluster binding"/>
    <property type="evidence" value="ECO:0007669"/>
    <property type="project" value="UniProtKB-KW"/>
</dbReference>
<dbReference type="GO" id="GO:0004076">
    <property type="term" value="F:biotin synthase activity"/>
    <property type="evidence" value="ECO:0007669"/>
    <property type="project" value="UniProtKB-UniRule"/>
</dbReference>
<dbReference type="GO" id="GO:0005506">
    <property type="term" value="F:iron ion binding"/>
    <property type="evidence" value="ECO:0007669"/>
    <property type="project" value="UniProtKB-UniRule"/>
</dbReference>
<dbReference type="GO" id="GO:0009102">
    <property type="term" value="P:biotin biosynthetic process"/>
    <property type="evidence" value="ECO:0007669"/>
    <property type="project" value="UniProtKB-UniRule"/>
</dbReference>
<dbReference type="CDD" id="cd01335">
    <property type="entry name" value="Radical_SAM"/>
    <property type="match status" value="1"/>
</dbReference>
<dbReference type="Gene3D" id="3.20.20.70">
    <property type="entry name" value="Aldolase class I"/>
    <property type="match status" value="1"/>
</dbReference>
<dbReference type="HAMAP" id="MF_01694">
    <property type="entry name" value="BioB"/>
    <property type="match status" value="1"/>
</dbReference>
<dbReference type="InterPro" id="IPR013785">
    <property type="entry name" value="Aldolase_TIM"/>
</dbReference>
<dbReference type="InterPro" id="IPR010722">
    <property type="entry name" value="BATS_dom"/>
</dbReference>
<dbReference type="InterPro" id="IPR002684">
    <property type="entry name" value="Biotin_synth/BioAB"/>
</dbReference>
<dbReference type="InterPro" id="IPR024177">
    <property type="entry name" value="Biotin_synthase"/>
</dbReference>
<dbReference type="InterPro" id="IPR006638">
    <property type="entry name" value="Elp3/MiaA/NifB-like_rSAM"/>
</dbReference>
<dbReference type="InterPro" id="IPR007197">
    <property type="entry name" value="rSAM"/>
</dbReference>
<dbReference type="NCBIfam" id="TIGR00433">
    <property type="entry name" value="bioB"/>
    <property type="match status" value="1"/>
</dbReference>
<dbReference type="PANTHER" id="PTHR22976">
    <property type="entry name" value="BIOTIN SYNTHASE"/>
    <property type="match status" value="1"/>
</dbReference>
<dbReference type="PANTHER" id="PTHR22976:SF2">
    <property type="entry name" value="BIOTIN SYNTHASE, MITOCHONDRIAL"/>
    <property type="match status" value="1"/>
</dbReference>
<dbReference type="Pfam" id="PF06968">
    <property type="entry name" value="BATS"/>
    <property type="match status" value="1"/>
</dbReference>
<dbReference type="Pfam" id="PF04055">
    <property type="entry name" value="Radical_SAM"/>
    <property type="match status" value="1"/>
</dbReference>
<dbReference type="PIRSF" id="PIRSF001619">
    <property type="entry name" value="Biotin_synth"/>
    <property type="match status" value="1"/>
</dbReference>
<dbReference type="SFLD" id="SFLDG01060">
    <property type="entry name" value="BATS_domain_containing"/>
    <property type="match status" value="1"/>
</dbReference>
<dbReference type="SFLD" id="SFLDF00272">
    <property type="entry name" value="biotin_synthase"/>
    <property type="match status" value="1"/>
</dbReference>
<dbReference type="SMART" id="SM00876">
    <property type="entry name" value="BATS"/>
    <property type="match status" value="1"/>
</dbReference>
<dbReference type="SMART" id="SM00729">
    <property type="entry name" value="Elp3"/>
    <property type="match status" value="1"/>
</dbReference>
<dbReference type="SUPFAM" id="SSF102114">
    <property type="entry name" value="Radical SAM enzymes"/>
    <property type="match status" value="1"/>
</dbReference>
<dbReference type="PROSITE" id="PS51918">
    <property type="entry name" value="RADICAL_SAM"/>
    <property type="match status" value="1"/>
</dbReference>
<comment type="function">
    <text evidence="1">Catalyzes the conversion of dethiobiotin (DTB) to biotin by the insertion of a sulfur atom into dethiobiotin via a radical-based mechanism.</text>
</comment>
<comment type="catalytic activity">
    <reaction evidence="1">
        <text>(4R,5S)-dethiobiotin + (sulfur carrier)-SH + 2 reduced [2Fe-2S]-[ferredoxin] + 2 S-adenosyl-L-methionine = (sulfur carrier)-H + biotin + 2 5'-deoxyadenosine + 2 L-methionine + 2 oxidized [2Fe-2S]-[ferredoxin]</text>
        <dbReference type="Rhea" id="RHEA:22060"/>
        <dbReference type="Rhea" id="RHEA-COMP:10000"/>
        <dbReference type="Rhea" id="RHEA-COMP:10001"/>
        <dbReference type="Rhea" id="RHEA-COMP:14737"/>
        <dbReference type="Rhea" id="RHEA-COMP:14739"/>
        <dbReference type="ChEBI" id="CHEBI:17319"/>
        <dbReference type="ChEBI" id="CHEBI:29917"/>
        <dbReference type="ChEBI" id="CHEBI:33737"/>
        <dbReference type="ChEBI" id="CHEBI:33738"/>
        <dbReference type="ChEBI" id="CHEBI:57586"/>
        <dbReference type="ChEBI" id="CHEBI:57844"/>
        <dbReference type="ChEBI" id="CHEBI:59789"/>
        <dbReference type="ChEBI" id="CHEBI:64428"/>
        <dbReference type="ChEBI" id="CHEBI:149473"/>
        <dbReference type="EC" id="2.8.1.6"/>
    </reaction>
</comment>
<comment type="cofactor">
    <cofactor evidence="1">
        <name>[4Fe-4S] cluster</name>
        <dbReference type="ChEBI" id="CHEBI:49883"/>
    </cofactor>
    <text evidence="1">Binds 1 [4Fe-4S] cluster. The cluster is coordinated with 3 cysteines and an exchangeable S-adenosyl-L-methionine.</text>
</comment>
<comment type="cofactor">
    <cofactor evidence="1">
        <name>[2Fe-2S] cluster</name>
        <dbReference type="ChEBI" id="CHEBI:190135"/>
    </cofactor>
    <text evidence="1">Binds 1 [2Fe-2S] cluster. The cluster is coordinated with 3 cysteines and 1 arginine.</text>
</comment>
<comment type="pathway">
    <text evidence="1">Cofactor biosynthesis; biotin biosynthesis; biotin from 7,8-diaminononanoate: step 2/2.</text>
</comment>
<comment type="subunit">
    <text evidence="1">Homodimer.</text>
</comment>
<comment type="similarity">
    <text evidence="1">Belongs to the radical SAM superfamily. Biotin synthase family.</text>
</comment>
<organism>
    <name type="scientific">Prochlorococcus marinus (strain AS9601)</name>
    <dbReference type="NCBI Taxonomy" id="146891"/>
    <lineage>
        <taxon>Bacteria</taxon>
        <taxon>Bacillati</taxon>
        <taxon>Cyanobacteriota</taxon>
        <taxon>Cyanophyceae</taxon>
        <taxon>Synechococcales</taxon>
        <taxon>Prochlorococcaceae</taxon>
        <taxon>Prochlorococcus</taxon>
    </lineage>
</organism>
<evidence type="ECO:0000255" key="1">
    <source>
        <dbReference type="HAMAP-Rule" id="MF_01694"/>
    </source>
</evidence>
<evidence type="ECO:0000255" key="2">
    <source>
        <dbReference type="PROSITE-ProRule" id="PRU01266"/>
    </source>
</evidence>